<protein>
    <recommendedName>
        <fullName>Defensin-like protein 246</fullName>
    </recommendedName>
    <alternativeName>
        <fullName>S locus cysteine-rich-like protein 5</fullName>
        <shortName>Protein SCRL5</shortName>
        <shortName>SCR-like protein 5</shortName>
    </alternativeName>
</protein>
<feature type="signal peptide" evidence="2">
    <location>
        <begin position="1"/>
        <end position="24"/>
    </location>
</feature>
<feature type="chain" id="PRO_0000031931" description="Defensin-like protein 246">
    <location>
        <begin position="25"/>
        <end position="97"/>
    </location>
</feature>
<feature type="disulfide bond" evidence="1">
    <location>
        <begin position="39"/>
        <end position="96"/>
    </location>
</feature>
<feature type="disulfide bond" evidence="1">
    <location>
        <begin position="50"/>
        <end position="79"/>
    </location>
</feature>
<feature type="disulfide bond" evidence="1">
    <location>
        <begin position="58"/>
        <end position="89"/>
    </location>
</feature>
<feature type="disulfide bond" evidence="1">
    <location>
        <begin position="77"/>
        <end position="91"/>
    </location>
</feature>
<feature type="splice variant" id="VSP_019749" description="In isoform 2." evidence="4">
    <location>
        <begin position="1"/>
        <end position="28"/>
    </location>
</feature>
<keyword id="KW-0025">Alternative splicing</keyword>
<keyword id="KW-0929">Antimicrobial</keyword>
<keyword id="KW-1015">Disulfide bond</keyword>
<keyword id="KW-0295">Fungicide</keyword>
<keyword id="KW-0611">Plant defense</keyword>
<keyword id="KW-1185">Reference proteome</keyword>
<keyword id="KW-0964">Secreted</keyword>
<keyword id="KW-0732">Signal</keyword>
<organism evidence="5">
    <name type="scientific">Arabidopsis thaliana</name>
    <name type="common">Mouse-ear cress</name>
    <dbReference type="NCBI Taxonomy" id="3702"/>
    <lineage>
        <taxon>Eukaryota</taxon>
        <taxon>Viridiplantae</taxon>
        <taxon>Streptophyta</taxon>
        <taxon>Embryophyta</taxon>
        <taxon>Tracheophyta</taxon>
        <taxon>Spermatophyta</taxon>
        <taxon>Magnoliopsida</taxon>
        <taxon>eudicotyledons</taxon>
        <taxon>Gunneridae</taxon>
        <taxon>Pentapetalae</taxon>
        <taxon>rosids</taxon>
        <taxon>malvids</taxon>
        <taxon>Brassicales</taxon>
        <taxon>Brassicaceae</taxon>
        <taxon>Camelineae</taxon>
        <taxon>Arabidopsis</taxon>
    </lineage>
</organism>
<name>DF246_ARATH</name>
<accession>P82624</accession>
<accession>Q1PFI3</accession>
<accession>Q5XVH8</accession>
<dbReference type="EMBL" id="AC018908">
    <property type="status" value="NOT_ANNOTATED_CDS"/>
    <property type="molecule type" value="Genomic_DNA"/>
</dbReference>
<dbReference type="EMBL" id="CP002684">
    <property type="protein sequence ID" value="AEE33759.1"/>
    <property type="molecule type" value="Genomic_DNA"/>
</dbReference>
<dbReference type="EMBL" id="AY735544">
    <property type="protein sequence ID" value="AAU44414.1"/>
    <property type="molecule type" value="mRNA"/>
</dbReference>
<dbReference type="EMBL" id="DQ446380">
    <property type="protein sequence ID" value="ABE65728.1"/>
    <property type="molecule type" value="mRNA"/>
</dbReference>
<dbReference type="RefSeq" id="NP_974058.1">
    <molecule id="P82624-1"/>
    <property type="nucleotide sequence ID" value="NM_202329.3"/>
</dbReference>
<dbReference type="STRING" id="3702.P82624"/>
<dbReference type="PaxDb" id="3702-AT1G60987.1"/>
<dbReference type="EnsemblPlants" id="AT1G60987.1">
    <molecule id="P82624-1"/>
    <property type="protein sequence ID" value="AT1G60987.1"/>
    <property type="gene ID" value="AT1G60987"/>
</dbReference>
<dbReference type="GeneID" id="2745838"/>
<dbReference type="Gramene" id="AT1G60987.1">
    <molecule id="P82624-1"/>
    <property type="protein sequence ID" value="AT1G60987.1"/>
    <property type="gene ID" value="AT1G60987"/>
</dbReference>
<dbReference type="KEGG" id="ath:AT1G60987"/>
<dbReference type="Araport" id="AT1G60987"/>
<dbReference type="TAIR" id="AT1G60987">
    <property type="gene designation" value="SCRL5"/>
</dbReference>
<dbReference type="HOGENOM" id="CLU_174283_0_0_1"/>
<dbReference type="InParanoid" id="P82624"/>
<dbReference type="OMA" id="RMNINAE"/>
<dbReference type="OrthoDB" id="10268421at2759"/>
<dbReference type="PhylomeDB" id="P82624"/>
<dbReference type="PRO" id="PR:P82624"/>
<dbReference type="Proteomes" id="UP000006548">
    <property type="component" value="Chromosome 1"/>
</dbReference>
<dbReference type="ExpressionAtlas" id="P82624">
    <property type="expression patterns" value="baseline and differential"/>
</dbReference>
<dbReference type="GO" id="GO:0005576">
    <property type="term" value="C:extracellular region"/>
    <property type="evidence" value="ECO:0007669"/>
    <property type="project" value="UniProtKB-SubCell"/>
</dbReference>
<dbReference type="GO" id="GO:0050832">
    <property type="term" value="P:defense response to fungus"/>
    <property type="evidence" value="ECO:0007669"/>
    <property type="project" value="UniProtKB-KW"/>
</dbReference>
<dbReference type="GO" id="GO:0031640">
    <property type="term" value="P:killing of cells of another organism"/>
    <property type="evidence" value="ECO:0007669"/>
    <property type="project" value="UniProtKB-KW"/>
</dbReference>
<dbReference type="GO" id="GO:0007165">
    <property type="term" value="P:signal transduction"/>
    <property type="evidence" value="ECO:0007669"/>
    <property type="project" value="InterPro"/>
</dbReference>
<dbReference type="InterPro" id="IPR010682">
    <property type="entry name" value="SCRL"/>
</dbReference>
<dbReference type="PANTHER" id="PTHR34450">
    <property type="entry name" value="DEFENSIN-LIKE PROTEIN 245-RELATED"/>
    <property type="match status" value="1"/>
</dbReference>
<dbReference type="PANTHER" id="PTHR34450:SF10">
    <property type="entry name" value="DEFENSIN-LIKE PROTEIN 245-RELATED"/>
    <property type="match status" value="1"/>
</dbReference>
<dbReference type="Pfam" id="PF06876">
    <property type="entry name" value="SCRL"/>
    <property type="match status" value="1"/>
</dbReference>
<evidence type="ECO:0000250" key="1"/>
<evidence type="ECO:0000255" key="2"/>
<evidence type="ECO:0000269" key="3">
    <source>
    </source>
</evidence>
<evidence type="ECO:0000303" key="4">
    <source ref="4"/>
</evidence>
<evidence type="ECO:0000305" key="5"/>
<comment type="subcellular location">
    <subcellularLocation>
        <location evidence="1">Secreted</location>
    </subcellularLocation>
</comment>
<comment type="alternative products">
    <event type="alternative splicing"/>
    <isoform>
        <id>P82624-1</id>
        <name>1</name>
        <sequence type="displayed"/>
    </isoform>
    <isoform>
        <id>P82624-2</id>
        <name>2</name>
        <sequence type="described" ref="VSP_019749"/>
    </isoform>
</comment>
<comment type="tissue specificity">
    <text evidence="3">Flower buds and stems.</text>
</comment>
<comment type="miscellaneous">
    <molecule>Isoform 2</molecule>
    <text evidence="5">May be due to intron retention.</text>
</comment>
<comment type="similarity">
    <text evidence="5">Belongs to the DEFL family.</text>
</comment>
<gene>
    <name type="primary">SCRL5</name>
    <name type="ordered locus">At1g60987</name>
    <name type="ORF">T7P1</name>
</gene>
<sequence length="97" mass="11119">MKFVAIFLVTCVLFSLFPSHLSQGEESRMNINAERRPWCPSKIQMFDTNCEVDGAKQCLDLLISTWDPSVRLTRVSCICSDFPYRNMMCSCPNMICP</sequence>
<reference evidence="5" key="1">
    <citation type="journal article" date="2000" name="Nature">
        <title>Sequence and analysis of chromosome 1 of the plant Arabidopsis thaliana.</title>
        <authorList>
            <person name="Theologis A."/>
            <person name="Ecker J.R."/>
            <person name="Palm C.J."/>
            <person name="Federspiel N.A."/>
            <person name="Kaul S."/>
            <person name="White O."/>
            <person name="Alonso J."/>
            <person name="Altafi H."/>
            <person name="Araujo R."/>
            <person name="Bowman C.L."/>
            <person name="Brooks S.Y."/>
            <person name="Buehler E."/>
            <person name="Chan A."/>
            <person name="Chao Q."/>
            <person name="Chen H."/>
            <person name="Cheuk R.F."/>
            <person name="Chin C.W."/>
            <person name="Chung M.K."/>
            <person name="Conn L."/>
            <person name="Conway A.B."/>
            <person name="Conway A.R."/>
            <person name="Creasy T.H."/>
            <person name="Dewar K."/>
            <person name="Dunn P."/>
            <person name="Etgu P."/>
            <person name="Feldblyum T.V."/>
            <person name="Feng J.-D."/>
            <person name="Fong B."/>
            <person name="Fujii C.Y."/>
            <person name="Gill J.E."/>
            <person name="Goldsmith A.D."/>
            <person name="Haas B."/>
            <person name="Hansen N.F."/>
            <person name="Hughes B."/>
            <person name="Huizar L."/>
            <person name="Hunter J.L."/>
            <person name="Jenkins J."/>
            <person name="Johnson-Hopson C."/>
            <person name="Khan S."/>
            <person name="Khaykin E."/>
            <person name="Kim C.J."/>
            <person name="Koo H.L."/>
            <person name="Kremenetskaia I."/>
            <person name="Kurtz D.B."/>
            <person name="Kwan A."/>
            <person name="Lam B."/>
            <person name="Langin-Hooper S."/>
            <person name="Lee A."/>
            <person name="Lee J.M."/>
            <person name="Lenz C.A."/>
            <person name="Li J.H."/>
            <person name="Li Y.-P."/>
            <person name="Lin X."/>
            <person name="Liu S.X."/>
            <person name="Liu Z.A."/>
            <person name="Luros J.S."/>
            <person name="Maiti R."/>
            <person name="Marziali A."/>
            <person name="Militscher J."/>
            <person name="Miranda M."/>
            <person name="Nguyen M."/>
            <person name="Nierman W.C."/>
            <person name="Osborne B.I."/>
            <person name="Pai G."/>
            <person name="Peterson J."/>
            <person name="Pham P.K."/>
            <person name="Rizzo M."/>
            <person name="Rooney T."/>
            <person name="Rowley D."/>
            <person name="Sakano H."/>
            <person name="Salzberg S.L."/>
            <person name="Schwartz J.R."/>
            <person name="Shinn P."/>
            <person name="Southwick A.M."/>
            <person name="Sun H."/>
            <person name="Tallon L.J."/>
            <person name="Tambunga G."/>
            <person name="Toriumi M.J."/>
            <person name="Town C.D."/>
            <person name="Utterback T."/>
            <person name="Van Aken S."/>
            <person name="Vaysberg M."/>
            <person name="Vysotskaia V.S."/>
            <person name="Walker M."/>
            <person name="Wu D."/>
            <person name="Yu G."/>
            <person name="Fraser C.M."/>
            <person name="Venter J.C."/>
            <person name="Davis R.W."/>
        </authorList>
    </citation>
    <scope>NUCLEOTIDE SEQUENCE [LARGE SCALE GENOMIC DNA]</scope>
    <source>
        <strain>cv. Columbia</strain>
    </source>
</reference>
<reference key="2">
    <citation type="journal article" date="2017" name="Plant J.">
        <title>Araport11: a complete reannotation of the Arabidopsis thaliana reference genome.</title>
        <authorList>
            <person name="Cheng C.Y."/>
            <person name="Krishnakumar V."/>
            <person name="Chan A.P."/>
            <person name="Thibaud-Nissen F."/>
            <person name="Schobel S."/>
            <person name="Town C.D."/>
        </authorList>
    </citation>
    <scope>GENOME REANNOTATION</scope>
    <source>
        <strain>cv. Columbia</strain>
    </source>
</reference>
<reference key="3">
    <citation type="submission" date="2004-04" db="EMBL/GenBank/DDBJ databases">
        <title>Reconstruction of cDNA sequences for hypothetical genes in Arabidopsis thaliana from 5' and 3' RACE products.</title>
        <authorList>
            <person name="Xiao Y.-L."/>
            <person name="Underwood B.A."/>
            <person name="Moskal W.A. Jr."/>
            <person name="Torian U."/>
            <person name="Redman J.C."/>
            <person name="Wu H.C."/>
            <person name="Utterback T."/>
            <person name="Town C.D."/>
        </authorList>
    </citation>
    <scope>NUCLEOTIDE SEQUENCE [LARGE SCALE MRNA] (ISOFORM 1)</scope>
    <source>
        <strain>cv. Columbia</strain>
    </source>
</reference>
<reference key="4">
    <citation type="submission" date="2006-03" db="EMBL/GenBank/DDBJ databases">
        <authorList>
            <person name="Underwood B.A."/>
            <person name="Xiao Y.-L."/>
            <person name="Moskal W.A. Jr."/>
            <person name="Monaghan E.L."/>
            <person name="Wang W."/>
            <person name="Redman J.C."/>
            <person name="Wu H.C."/>
            <person name="Utterback T."/>
            <person name="Town C.D."/>
        </authorList>
    </citation>
    <scope>NUCLEOTIDE SEQUENCE [LARGE SCALE MRNA] (ISOFORM 2)</scope>
    <source>
        <strain>cv. Columbia</strain>
    </source>
</reference>
<reference evidence="5" key="5">
    <citation type="journal article" date="2001" name="Plant Mol. Biol.">
        <title>Two large Arabidopsis thaliana gene families are homologous to the Brassica gene superfamily that encodes pollen coat proteins and the male component of the self-incompatibility response.</title>
        <authorList>
            <person name="Vanoosthuyse V."/>
            <person name="Miege C."/>
            <person name="Dumas C."/>
            <person name="Cock J.M."/>
        </authorList>
    </citation>
    <scope>IDENTIFICATION</scope>
    <scope>TISSUE SPECIFICITY</scope>
</reference>
<reference key="6">
    <citation type="journal article" date="2005" name="Plant Physiol.">
        <title>Genome organization of more than 300 defensin-like genes in Arabidopsis.</title>
        <authorList>
            <person name="Silverstein K.A.T."/>
            <person name="Graham M.A."/>
            <person name="Paape T.D."/>
            <person name="VandenBosch K.A."/>
        </authorList>
    </citation>
    <scope>GENE FAMILY</scope>
</reference>
<proteinExistence type="evidence at transcript level"/>